<evidence type="ECO:0000255" key="1">
    <source>
        <dbReference type="HAMAP-Rule" id="MF_00374"/>
    </source>
</evidence>
<evidence type="ECO:0000305" key="2"/>
<sequence length="67" mass="8020">MKVKELREMTDVELRKKLADTKDELFRLRFQSATGQLDNPMKIQEVRRRIARVKTVLRERELGIKHA</sequence>
<reference key="1">
    <citation type="submission" date="2007-10" db="EMBL/GenBank/DDBJ databases">
        <title>Complete sequence of chromosome of Desulforudis audaxviator MP104C.</title>
        <authorList>
            <person name="Copeland A."/>
            <person name="Lucas S."/>
            <person name="Lapidus A."/>
            <person name="Barry K."/>
            <person name="Glavina del Rio T."/>
            <person name="Dalin E."/>
            <person name="Tice H."/>
            <person name="Bruce D."/>
            <person name="Pitluck S."/>
            <person name="Lowry S.R."/>
            <person name="Larimer F."/>
            <person name="Land M.L."/>
            <person name="Hauser L."/>
            <person name="Kyrpides N."/>
            <person name="Ivanova N.N."/>
            <person name="Richardson P."/>
        </authorList>
    </citation>
    <scope>NUCLEOTIDE SEQUENCE [LARGE SCALE GENOMIC DNA]</scope>
    <source>
        <strain>MP104C</strain>
    </source>
</reference>
<dbReference type="EMBL" id="CP000860">
    <property type="protein sequence ID" value="ACA58794.1"/>
    <property type="molecule type" value="Genomic_DNA"/>
</dbReference>
<dbReference type="RefSeq" id="WP_012301386.1">
    <property type="nucleotide sequence ID" value="NC_010424.1"/>
</dbReference>
<dbReference type="SMR" id="B1I1J6"/>
<dbReference type="STRING" id="477974.Daud_0233"/>
<dbReference type="KEGG" id="dau:Daud_0233"/>
<dbReference type="eggNOG" id="COG0255">
    <property type="taxonomic scope" value="Bacteria"/>
</dbReference>
<dbReference type="HOGENOM" id="CLU_158491_5_2_9"/>
<dbReference type="OrthoDB" id="9815192at2"/>
<dbReference type="Proteomes" id="UP000008544">
    <property type="component" value="Chromosome"/>
</dbReference>
<dbReference type="GO" id="GO:0022625">
    <property type="term" value="C:cytosolic large ribosomal subunit"/>
    <property type="evidence" value="ECO:0007669"/>
    <property type="project" value="TreeGrafter"/>
</dbReference>
<dbReference type="GO" id="GO:0003735">
    <property type="term" value="F:structural constituent of ribosome"/>
    <property type="evidence" value="ECO:0007669"/>
    <property type="project" value="InterPro"/>
</dbReference>
<dbReference type="GO" id="GO:0006412">
    <property type="term" value="P:translation"/>
    <property type="evidence" value="ECO:0007669"/>
    <property type="project" value="UniProtKB-UniRule"/>
</dbReference>
<dbReference type="CDD" id="cd00427">
    <property type="entry name" value="Ribosomal_L29_HIP"/>
    <property type="match status" value="1"/>
</dbReference>
<dbReference type="FunFam" id="1.10.287.310:FF:000001">
    <property type="entry name" value="50S ribosomal protein L29"/>
    <property type="match status" value="1"/>
</dbReference>
<dbReference type="Gene3D" id="1.10.287.310">
    <property type="match status" value="1"/>
</dbReference>
<dbReference type="HAMAP" id="MF_00374">
    <property type="entry name" value="Ribosomal_uL29"/>
    <property type="match status" value="1"/>
</dbReference>
<dbReference type="InterPro" id="IPR050063">
    <property type="entry name" value="Ribosomal_protein_uL29"/>
</dbReference>
<dbReference type="InterPro" id="IPR001854">
    <property type="entry name" value="Ribosomal_uL29"/>
</dbReference>
<dbReference type="InterPro" id="IPR036049">
    <property type="entry name" value="Ribosomal_uL29_sf"/>
</dbReference>
<dbReference type="NCBIfam" id="TIGR00012">
    <property type="entry name" value="L29"/>
    <property type="match status" value="1"/>
</dbReference>
<dbReference type="PANTHER" id="PTHR10916">
    <property type="entry name" value="60S RIBOSOMAL PROTEIN L35/50S RIBOSOMAL PROTEIN L29"/>
    <property type="match status" value="1"/>
</dbReference>
<dbReference type="PANTHER" id="PTHR10916:SF0">
    <property type="entry name" value="LARGE RIBOSOMAL SUBUNIT PROTEIN UL29C"/>
    <property type="match status" value="1"/>
</dbReference>
<dbReference type="Pfam" id="PF00831">
    <property type="entry name" value="Ribosomal_L29"/>
    <property type="match status" value="1"/>
</dbReference>
<dbReference type="SUPFAM" id="SSF46561">
    <property type="entry name" value="Ribosomal protein L29 (L29p)"/>
    <property type="match status" value="1"/>
</dbReference>
<name>RL29_DESAP</name>
<organism>
    <name type="scientific">Desulforudis audaxviator (strain MP104C)</name>
    <dbReference type="NCBI Taxonomy" id="477974"/>
    <lineage>
        <taxon>Bacteria</taxon>
        <taxon>Bacillati</taxon>
        <taxon>Bacillota</taxon>
        <taxon>Clostridia</taxon>
        <taxon>Thermoanaerobacterales</taxon>
        <taxon>Candidatus Desulforudaceae</taxon>
        <taxon>Candidatus Desulforudis</taxon>
    </lineage>
</organism>
<gene>
    <name evidence="1" type="primary">rpmC</name>
    <name type="ordered locus">Daud_0233</name>
</gene>
<accession>B1I1J6</accession>
<feature type="chain" id="PRO_1000121761" description="Large ribosomal subunit protein uL29">
    <location>
        <begin position="1"/>
        <end position="67"/>
    </location>
</feature>
<keyword id="KW-1185">Reference proteome</keyword>
<keyword id="KW-0687">Ribonucleoprotein</keyword>
<keyword id="KW-0689">Ribosomal protein</keyword>
<protein>
    <recommendedName>
        <fullName evidence="1">Large ribosomal subunit protein uL29</fullName>
    </recommendedName>
    <alternativeName>
        <fullName evidence="2">50S ribosomal protein L29</fullName>
    </alternativeName>
</protein>
<comment type="similarity">
    <text evidence="1">Belongs to the universal ribosomal protein uL29 family.</text>
</comment>
<proteinExistence type="inferred from homology"/>